<proteinExistence type="evidence at protein level"/>
<accession>O88382</accession>
<accession>Q9R271</accession>
<organism>
    <name type="scientific">Rattus norvegicus</name>
    <name type="common">Rat</name>
    <dbReference type="NCBI Taxonomy" id="10116"/>
    <lineage>
        <taxon>Eukaryota</taxon>
        <taxon>Metazoa</taxon>
        <taxon>Chordata</taxon>
        <taxon>Craniata</taxon>
        <taxon>Vertebrata</taxon>
        <taxon>Euteleostomi</taxon>
        <taxon>Mammalia</taxon>
        <taxon>Eutheria</taxon>
        <taxon>Euarchontoglires</taxon>
        <taxon>Glires</taxon>
        <taxon>Rodentia</taxon>
        <taxon>Myomorpha</taxon>
        <taxon>Muroidea</taxon>
        <taxon>Muridae</taxon>
        <taxon>Murinae</taxon>
        <taxon>Rattus</taxon>
    </lineage>
</organism>
<reference key="1">
    <citation type="journal article" date="1998" name="J. Biol. Chem.">
        <title>A novel multiple PDZ domain-containing molecule interacting with N-methyl-d-aspartate receptors and neuronal cell adhesion proteins.</title>
        <authorList>
            <person name="Hirao K."/>
            <person name="Hata Y."/>
            <person name="Ide N."/>
            <person name="Takeuchi M."/>
            <person name="Irie M."/>
            <person name="Yao I."/>
            <person name="Deguchi M."/>
            <person name="Toyoda A."/>
            <person name="Suedhof T.C."/>
            <person name="Takai Y."/>
        </authorList>
    </citation>
    <scope>NUCLEOTIDE SEQUENCE [MRNA] (ISOFORM 1)</scope>
    <scope>FUNCTION</scope>
    <scope>SUBCELLULAR LOCATION</scope>
    <scope>TISSUE SPECIFICITY</scope>
    <scope>INTERACTION WITH DLGAP1; NLGN1 AND GRIN2A</scope>
</reference>
<reference key="2">
    <citation type="journal article" date="2000" name="J. Biol. Chem.">
        <title>Three isoforms of synaptic scaffolding molecule and their characterization: multimerization between the isoforms and their interaction with N-methyl-D-aspartate receptors and SAP90/PSD-95-associated protein.</title>
        <authorList>
            <person name="Hirao K."/>
            <person name="Hata Y."/>
            <person name="Yao I."/>
            <person name="Deguchi M."/>
            <person name="Kawabe H."/>
            <person name="Mizoguchi A."/>
            <person name="Takai Y."/>
        </authorList>
    </citation>
    <scope>NUCLEOTIDE SEQUENCE [MRNA] (ISOFORM 2)</scope>
    <scope>ALTERNATIVE SPLICING (ISOFORM 3)</scope>
</reference>
<reference key="3">
    <citation type="journal article" date="1999" name="Biochem. Biophys. Res. Commun.">
        <title>Interaction of S-SCAM with neural plakophilin-related Armadillo-repeat protein/delta-catenin.</title>
        <authorList>
            <person name="Ide N."/>
            <person name="Hata Y."/>
            <person name="Deguchi M."/>
            <person name="Hirao K."/>
            <person name="Yao I."/>
            <person name="Takai Y."/>
        </authorList>
    </citation>
    <scope>INTERACTION WITH CTNND2</scope>
</reference>
<reference key="4">
    <citation type="journal article" date="1999" name="Biochem. Biophys. Res. Commun.">
        <title>nRap GEP: a novel neural GDP/GTP exchange protein for rap1 small G protein that interacts with synaptic scaffolding molecule (S-SCAM).</title>
        <authorList>
            <person name="Ohtsuka T."/>
            <person name="Hata Y."/>
            <person name="Ide N."/>
            <person name="Yasuda T."/>
            <person name="Inoue E."/>
            <person name="Inoue T."/>
            <person name="Mizoguchi A."/>
            <person name="Takai Y."/>
        </authorList>
    </citation>
    <scope>INTERACTION WITH RAPGEF2</scope>
</reference>
<reference key="5">
    <citation type="journal article" date="1999" name="J. Biol. Chem.">
        <title>MAGUIN, a novel neuronal membrane-associated guanylate kinase-interacting protein.</title>
        <authorList>
            <person name="Yao I."/>
            <person name="Hata Y."/>
            <person name="Ide N."/>
            <person name="Hirao K."/>
            <person name="Deguchi M."/>
            <person name="Nishioka H."/>
            <person name="Mizoguchi A."/>
            <person name="Takai Y."/>
        </authorList>
    </citation>
    <scope>INTERACTION WITH MAGUIN-1</scope>
</reference>
<reference key="6">
    <citation type="journal article" date="2003" name="Biochem. Biophys. Res. Commun.">
        <title>PKC regulates the delta2 glutamate receptor interaction with S-SCAM/MAGI-2 protein.</title>
        <authorList>
            <person name="Yap C.C."/>
            <person name="Muto Y."/>
            <person name="Kishida H."/>
            <person name="Hashikawa T."/>
            <person name="Yano R."/>
        </authorList>
    </citation>
    <scope>INTERACTION WITH GRID2</scope>
</reference>
<reference key="7">
    <citation type="journal article" date="2005" name="J. Biol. Chem.">
        <title>Binding of PTEN to specific PDZ domains contributes to PTEN protein stability and phosphorylation by microtubule-associated serine/threonine kinases.</title>
        <authorList>
            <person name="Valiente M."/>
            <person name="Andres-Pons A."/>
            <person name="Gomar B."/>
            <person name="Torres J."/>
            <person name="Gil A."/>
            <person name="Tapparel C."/>
            <person name="Antonarakis S.E."/>
            <person name="Pulido R."/>
        </authorList>
    </citation>
    <scope>INTERACTION WITH PTEN</scope>
</reference>
<reference key="8">
    <citation type="journal article" date="2005" name="Proc. Natl. Acad. Sci. U.S.A.">
        <title>Cell junction-associated proteins IQGAP1, MAGI-2, CASK, spectrins, and alpha-actinin are components of the nephrin multiprotein complex.</title>
        <authorList>
            <person name="Lehtonen S."/>
            <person name="Ryan J.J."/>
            <person name="Kudlicka K."/>
            <person name="Iino N."/>
            <person name="Zhou H."/>
            <person name="Farquhar M.G."/>
        </authorList>
    </citation>
    <scope>IDENTIFICATION IN A COMPLEX WITH ACTN4; CASK; IQGAP1; NPHS1; SPTAN1 AND SPTBN1</scope>
    <scope>IDENTIFICATION BY MASS SPECTROMETRY</scope>
    <scope>TISSUE SPECIFICITY</scope>
    <scope>DEVELOPMENTAL STAGE</scope>
    <source>
        <strain>Sprague-Dawley</strain>
        <tissue>Renal glomerulus</tissue>
    </source>
</reference>
<reference key="9">
    <citation type="journal article" date="2006" name="J. Biochem.">
        <title>CIN85 is localized at synapses and forms a complex with S-SCAM via dendrin.</title>
        <authorList>
            <person name="Kawata A."/>
            <person name="Iida J."/>
            <person name="Ikeda M."/>
            <person name="Sato Y."/>
            <person name="Mori H."/>
            <person name="Kansaku A."/>
            <person name="Sumita K."/>
            <person name="Fujiwara N."/>
            <person name="Rokukawa C."/>
            <person name="Hamano M."/>
            <person name="Hirabayashi S."/>
            <person name="Hata Y."/>
        </authorList>
    </citation>
    <scope>INTERACTION WITH DDN</scope>
</reference>
<reference key="10">
    <citation type="journal article" date="2006" name="J. Neurochem.">
        <title>Postsynaptic recruitment of Dendrin depends on both dendritic mRNA transport and synaptic anchoring.</title>
        <authorList>
            <person name="Kremerskothen J."/>
            <person name="Kindler S."/>
            <person name="Finger I."/>
            <person name="Veltel S."/>
            <person name="Barnekow A."/>
        </authorList>
    </citation>
    <scope>INTERACTION WITH DDN</scope>
</reference>
<reference key="11">
    <citation type="journal article" date="2007" name="J. Cell Biol.">
        <title>Rap1-PDZ-GEF1 interacts with a neurotrophin receptor at late endosomes, leading to sustained activation of Rap1 and ERK and neurite outgrowth.</title>
        <authorList>
            <person name="Hisata S."/>
            <person name="Sakisaka T."/>
            <person name="Baba T."/>
            <person name="Yamada T."/>
            <person name="Aoki K."/>
            <person name="Matsuda M."/>
            <person name="Takai Y."/>
        </authorList>
    </citation>
    <scope>FUNCTION</scope>
    <scope>IDENTIFICATION IN A COMPLEX WITH KIDINS220; RAPGEF2 AND NTRK1</scope>
    <scope>INTERACTION WITH RAPGEF2 AND KIDINS220</scope>
    <scope>SUBCELLULAR LOCATION</scope>
</reference>
<reference key="12">
    <citation type="journal article" date="2012" name="Nat. Commun.">
        <title>Quantitative maps of protein phosphorylation sites across 14 different rat organs and tissues.</title>
        <authorList>
            <person name="Lundby A."/>
            <person name="Secher A."/>
            <person name="Lage K."/>
            <person name="Nordsborg N.B."/>
            <person name="Dmytriyev A."/>
            <person name="Lundby C."/>
            <person name="Olsen J.V."/>
        </authorList>
    </citation>
    <scope>PHOSPHORYLATION [LARGE SCALE ANALYSIS] AT SER-686; SER-884 AND SER-885</scope>
    <scope>IDENTIFICATION BY MASS SPECTROMETRY [LARGE SCALE ANALYSIS]</scope>
</reference>
<reference key="13">
    <citation type="journal article" date="2013" name="J. Cell Biol.">
        <title>The adhesion protein IgSF9b is coupled to neuroligin 2 via S-SCAM to promote inhibitory synapse development.</title>
        <authorList>
            <person name="Woo J."/>
            <person name="Kwon S.K."/>
            <person name="Nam J."/>
            <person name="Choi S."/>
            <person name="Takahashi H."/>
            <person name="Krueger D."/>
            <person name="Park J."/>
            <person name="Lee Y."/>
            <person name="Bae J.Y."/>
            <person name="Lee D."/>
            <person name="Ko J."/>
            <person name="Kim H."/>
            <person name="Kim M.H."/>
            <person name="Bae Y.C."/>
            <person name="Chang S."/>
            <person name="Craig A.M."/>
            <person name="Kim E."/>
        </authorList>
    </citation>
    <scope>IDENTIFICATION IN A COMPLEX WITH IGSF9B AND NLGN2</scope>
</reference>
<sequence>MSKSLKKKSHWTSKVHESVIGRNPEGQLGFELKGGAENGQFPYLGEVKPGKVAYESGSKLVSEELLLEVNETPVAGLTIRDVLAVIKHCKDPLRLKCVKQGGIVDKDLRHYLNLRFQKGSVDHELQQIIRDNLYLRTVPCTTRPHKEGEVPGVDYIFITVEDFMELEKSGALLESGTYEDNYYGTPKPPAEPAPLLLNVTDQILPGATPSAEGKRKRNKSVTNMEKASIEPPEEEEEERPVVNGNGVVITPESSEHEDKSAGASGETPSQPYPAPVYSQPEELKDQMDDTKSTKPEENEDSDPLPDNWEMAYTEKGEVYFIDHNTKTTSWLDPRLAKKAKPAEECKENELPYGWEKIDDPIYGTYYVDHINRRTQFENPVLEAKRKLQQHNMPHTELGTKPLQAPGFREKPLFTRDASQLKGTFLSTTLKKSNMGFGFTIIGGDEPDEFLQVKSVIPDGPAAQDGKMETGDVIVYINEVCVLGHTHADVVKLFQSVPIGQSVNLVLCRGYPLPFDPEDPANSMVPPLAIMERPPPVMVNGRHNYETYLEYISRTSQSVPDITDRPPHSLHSMPADGQLDGTYPPPVHDDNVSVASSGATQAELMTLTIVKGAKGFGFTIADSPTGQRVKQILDIQGCPGLCEGDLIVEINQQNVQNLSHTEVVDILKDCPVGSETSLIIHRGGFFSPWKTPKPMVDRWENQGSPQTSLSAPAVPQSLPFPPALHRSSFPDSTEAFDPRKPDPYELYEKSRAIYESRQQVPPRTSFRMDSSGPDYKELDVHLRRMESGFGFRILGGDEPGQPILIGAVIAMGSADRDGRLHPGDELVYVDGIPVAGKTHRYVIDLMHHAARNGQVNLTVRRKVLCGGEPCPENGRSPGSVSTHHSSPRSDYATYANSNHAAPSNNASPPEGFASHSLQTSDVIIHRKENEGFGFVIISSLNRPESGATITVPHKIGRIIDGSPADRCAKLKVGDRILAVNGQSIINMPHADIVKLIKDAGLSVTLRIIPQEELNNPTSAPSSEKQSPMAQQHSPLAQQHSPLAQPSPATPNSPVAQPAPPQPLQLQGHENSYRSEVKARQDVKPDIRQPPFTDYRQPPLDYRQPPGGDYSQPSPLDYRQHSPDTRQYPLSDYRQPQDFDYFTVDMEKGAKGFGFSIRGGREYKMDLYVLRLAEDGPAIRNGRMRVGDQIIEINGESTRDMTHARAIELIKSGGRRVRLLLKRGTGQVPEYGMVPSSLSMCMKSDKHGSPYFYLLGHPKDTTNPTPGALPLPPPQACRK</sequence>
<protein>
    <recommendedName>
        <fullName>Membrane-associated guanylate kinase, WW and PDZ domain-containing protein 2</fullName>
    </recommendedName>
    <alternativeName>
        <fullName>Atrophin-1-interacting protein 1</fullName>
        <shortName>AIP-1</shortName>
    </alternativeName>
    <alternativeName>
        <fullName>Membrane-associated guanylate kinase inverted 2</fullName>
        <shortName>MAGI-2</shortName>
    </alternativeName>
    <alternativeName>
        <fullName>Synaptic-scaffolding molecule</fullName>
        <shortName>S-SCAM</shortName>
    </alternativeName>
</protein>
<comment type="function">
    <text evidence="2 3 16 18">Seems to act as scaffold molecule at synaptic junctions by assembling neurotransmitter receptors and cell adhesion proteins (PubMed:9694864). Plays a role in nerve growth factor (NGF)-induced recruitment of RAPGEF2 to late endosomes and neurite outgrowth (PubMed:17724123). May play a role in regulating activin-mediated signaling in neuronal cells (By similarity). Enhances the ability of PTEN to suppress AKT1 activation (By similarity). Plays a role in receptor-mediated clathrin-dependent endocytosis which is required for ciliogenesis (By similarity).</text>
</comment>
<comment type="subunit">
    <text evidence="3 8 9 10 11 12 13 14 15 16 17 18">Interacts (via its WW domains) with DRPLA (By similarity). Interacts with CTNNB1, ACVR2A, SMAD2 and SMAD3 (By similarity). Part of a complex consisting of MAGI2/ARIP1, ACVR2A, ACVR1B and SMAD3 (By similarity). May interact with HTR2A and IGSF9 (By similarity). Interacts with HTR4 (By similarity). Interacts (via guanylate kinase domain) with DLGAP1 (PubMed:9694864). Interacts (via PDZ domains) with GRIN2A, GRID2 and NLGN1 (PubMed:12589829, PubMed:9694864). Interacts with CTNND2 (PubMed:10080919). Interacts with MAGUIN-1 (PubMed:10207009). Interacts (via its second PDZ domain) with PTEN (via unphosphorylated C-terminus); this interaction diminishes the degradation rate of PTEN (PubMed:15951562). Found in a complex, at least composed of KIDINS220, MAGI2, NTRK1 and RAPGEF2; the complex is mainly formed at late endosomes in a NGF-dependent manner (PubMed:17724123). Interacts with RAPGEF2; the interaction occurs before or after nerve growth factor (NGF) stimulation (PubMed:10548487). Isoform 1 interacts (via PDZ domain) with KIDINS220 isoform 2 (via C-terminal domain) (PubMed:17724123). Interacts with DDN (PubMed:16464232, PubMed:16751601). Identified in a complex with ACTN4, CASK, IQGAP1, NPHS1, SPTAN1 and SPTBN1 (PubMed:15994232). Interacts with DLL1 (By similarity). Found in a complex with IGSF9B and NLGN2; the interaction with IGSF9B is mediated via the PDZ 5 and PDZ 6 domains, while the interaction with NLGN2 is mediated via the WW1, WW2 and PDZ2 domains (PubMed:23751499). Interacts (via PDZ 6 domain) with USH1G (via SAM domain); the interaction is triggered by phosphorylation of USH1G by CK2 and negatively regulates MAGI2-mediated endocytosis (By similarity).</text>
</comment>
<comment type="interaction">
    <interactant intactId="EBI-696179">
        <id>O88382</id>
    </interactant>
    <interactant intactId="EBI-80901">
        <id>P97836</id>
        <label>Dlgap1</label>
    </interactant>
    <organismsDiffer>false</organismsDiffer>
    <experiments>3</experiments>
</comment>
<comment type="interaction">
    <interactant intactId="EBI-696179">
        <id>O88382</id>
    </interactant>
    <interactant intactId="EBI-7361884">
        <id>Q8R4T5</id>
        <label>Tamalin</label>
    </interactant>
    <organismsDiffer>false</organismsDiffer>
    <experiments>5</experiments>
</comment>
<comment type="interaction">
    <interactant intactId="EBI-696179">
        <id>O88382</id>
    </interactant>
    <interactant intactId="EBI-3870393">
        <id>P34998</id>
        <label>CRHR1</label>
    </interactant>
    <organismsDiffer>true</organismsDiffer>
    <experiments>2</experiments>
</comment>
<comment type="interaction">
    <interactant intactId="EBI-696179">
        <id>O88382</id>
    </interactant>
    <interactant intactId="EBI-5240523">
        <id>O94850</id>
        <label>DDN</label>
    </interactant>
    <organismsDiffer>true</organismsDiffer>
    <experiments>3</experiments>
</comment>
<comment type="interaction">
    <interactant intactId="EBI-696179">
        <id>O88382</id>
    </interactant>
    <interactant intactId="EBI-696162">
        <id>P60484</id>
        <label>PTEN</label>
    </interactant>
    <organismsDiffer>true</organismsDiffer>
    <experiments>3</experiments>
</comment>
<comment type="subcellular location">
    <subcellularLocation>
        <location>Cytoplasm</location>
    </subcellularLocation>
    <subcellularLocation>
        <location>Late endosome</location>
    </subcellularLocation>
    <subcellularLocation>
        <location>Synapse</location>
        <location>Synaptosome</location>
    </subcellularLocation>
    <subcellularLocation>
        <location>Cell membrane</location>
        <topology>Peripheral membrane protein</topology>
    </subcellularLocation>
    <subcellularLocation>
        <location evidence="3">Cytoplasm</location>
        <location evidence="3">Cytoskeleton</location>
        <location evidence="3">Microtubule organizing center</location>
        <location evidence="3">Centrosome</location>
    </subcellularLocation>
    <subcellularLocation>
        <location evidence="3">Cell projection</location>
        <location evidence="3">Cilium</location>
    </subcellularLocation>
    <subcellularLocation>
        <location evidence="3">Cytoplasm</location>
        <location evidence="3">Cytoskeleton</location>
        <location evidence="3">Microtubule organizing center</location>
        <location evidence="3">Centrosome</location>
        <location evidence="3">Centriole</location>
    </subcellularLocation>
    <subcellularLocation>
        <location evidence="3">Photoreceptor inner segment</location>
    </subcellularLocation>
    <subcellularLocation>
        <location evidence="3">Cell projection</location>
        <location evidence="3">Cilium</location>
        <location evidence="3">Photoreceptor outer segment</location>
    </subcellularLocation>
    <text>Membrane-associated in synaptosomes. Localized diffusely in the cytoplasm before nerve growth factor (NGF) stimulation. Recruited to late endosomes after NGF stimulation.</text>
</comment>
<comment type="alternative products">
    <event type="alternative splicing"/>
    <isoform>
        <id>O88382-1</id>
        <name>1</name>
        <name>alpha</name>
        <sequence type="displayed"/>
    </isoform>
    <isoform>
        <id>O88382-2</id>
        <name>2</name>
        <name>beta</name>
        <sequence type="described" ref="VSP_008438"/>
    </isoform>
    <isoform>
        <id>O88382-3</id>
        <name>3</name>
        <name>gamma</name>
        <sequence type="described" ref="VSP_008439"/>
    </isoform>
</comment>
<comment type="tissue specificity">
    <text evidence="13 18">Expressed in the foot process layer of podocytes of the kidney glomeruli but not in tubules (at protein level). Expressed in the brain.</text>
</comment>
<comment type="developmental stage">
    <text evidence="13">Expressed during the late capillary loop stage of glomerulogenesis. First detected in junctional complexes in podocytes after their migration to the base of cells. Up-regulated upon foot process differentiation.</text>
</comment>
<comment type="similarity">
    <text evidence="20">Belongs to the MAGUK family.</text>
</comment>
<name>MAGI2_RAT</name>
<evidence type="ECO:0000250" key="1"/>
<evidence type="ECO:0000250" key="2">
    <source>
        <dbReference type="UniProtKB" id="Q86UL8"/>
    </source>
</evidence>
<evidence type="ECO:0000250" key="3">
    <source>
        <dbReference type="UniProtKB" id="Q9WVQ1"/>
    </source>
</evidence>
<evidence type="ECO:0000255" key="4">
    <source>
        <dbReference type="PROSITE-ProRule" id="PRU00100"/>
    </source>
</evidence>
<evidence type="ECO:0000255" key="5">
    <source>
        <dbReference type="PROSITE-ProRule" id="PRU00143"/>
    </source>
</evidence>
<evidence type="ECO:0000255" key="6">
    <source>
        <dbReference type="PROSITE-ProRule" id="PRU00224"/>
    </source>
</evidence>
<evidence type="ECO:0000256" key="7">
    <source>
        <dbReference type="SAM" id="MobiDB-lite"/>
    </source>
</evidence>
<evidence type="ECO:0000269" key="8">
    <source>
    </source>
</evidence>
<evidence type="ECO:0000269" key="9">
    <source>
    </source>
</evidence>
<evidence type="ECO:0000269" key="10">
    <source>
    </source>
</evidence>
<evidence type="ECO:0000269" key="11">
    <source>
    </source>
</evidence>
<evidence type="ECO:0000269" key="12">
    <source>
    </source>
</evidence>
<evidence type="ECO:0000269" key="13">
    <source>
    </source>
</evidence>
<evidence type="ECO:0000269" key="14">
    <source>
    </source>
</evidence>
<evidence type="ECO:0000269" key="15">
    <source>
    </source>
</evidence>
<evidence type="ECO:0000269" key="16">
    <source>
    </source>
</evidence>
<evidence type="ECO:0000269" key="17">
    <source>
    </source>
</evidence>
<evidence type="ECO:0000269" key="18">
    <source>
    </source>
</evidence>
<evidence type="ECO:0000303" key="19">
    <source>
    </source>
</evidence>
<evidence type="ECO:0000305" key="20"/>
<evidence type="ECO:0007744" key="21">
    <source>
    </source>
</evidence>
<keyword id="KW-0025">Alternative splicing</keyword>
<keyword id="KW-1003">Cell membrane</keyword>
<keyword id="KW-0966">Cell projection</keyword>
<keyword id="KW-0963">Cytoplasm</keyword>
<keyword id="KW-0206">Cytoskeleton</keyword>
<keyword id="KW-0254">Endocytosis</keyword>
<keyword id="KW-0967">Endosome</keyword>
<keyword id="KW-0472">Membrane</keyword>
<keyword id="KW-0524">Neurogenesis</keyword>
<keyword id="KW-0597">Phosphoprotein</keyword>
<keyword id="KW-1185">Reference proteome</keyword>
<keyword id="KW-0677">Repeat</keyword>
<keyword id="KW-0770">Synapse</keyword>
<keyword id="KW-0771">Synaptosome</keyword>
<feature type="chain" id="PRO_0000094588" description="Membrane-associated guanylate kinase, WW and PDZ domain-containing protein 2">
    <location>
        <begin position="1"/>
        <end position="1277"/>
    </location>
</feature>
<feature type="domain" description="PDZ" evidence="5">
    <location>
        <begin position="17"/>
        <end position="101"/>
    </location>
</feature>
<feature type="domain" description="Guanylate kinase-like" evidence="4">
    <location>
        <begin position="109"/>
        <end position="283"/>
    </location>
</feature>
<feature type="domain" description="WW 1" evidence="6">
    <location>
        <begin position="302"/>
        <end position="335"/>
    </location>
</feature>
<feature type="domain" description="WW 2" evidence="6">
    <location>
        <begin position="348"/>
        <end position="381"/>
    </location>
</feature>
<feature type="domain" description="PDZ 1" evidence="5">
    <location>
        <begin position="426"/>
        <end position="510"/>
    </location>
</feature>
<feature type="domain" description="PDZ 2" evidence="5">
    <location>
        <begin position="605"/>
        <end position="683"/>
    </location>
</feature>
<feature type="domain" description="PDZ 3" evidence="5">
    <location>
        <begin position="778"/>
        <end position="860"/>
    </location>
</feature>
<feature type="domain" description="PDZ 4" evidence="5">
    <location>
        <begin position="920"/>
        <end position="1010"/>
    </location>
</feature>
<feature type="domain" description="PDZ 5" evidence="5">
    <location>
        <begin position="1141"/>
        <end position="1223"/>
    </location>
</feature>
<feature type="region of interest" description="Disordered" evidence="7">
    <location>
        <begin position="205"/>
        <end position="308"/>
    </location>
</feature>
<feature type="region of interest" description="Interaction with DDN" evidence="1">
    <location>
        <begin position="302"/>
        <end position="381"/>
    </location>
</feature>
<feature type="region of interest" description="Disordered" evidence="7">
    <location>
        <begin position="556"/>
        <end position="575"/>
    </location>
</feature>
<feature type="region of interest" description="Disordered" evidence="7">
    <location>
        <begin position="869"/>
        <end position="913"/>
    </location>
</feature>
<feature type="region of interest" description="Disordered" evidence="7">
    <location>
        <begin position="1011"/>
        <end position="1130"/>
    </location>
</feature>
<feature type="compositionally biased region" description="Basic and acidic residues" evidence="7">
    <location>
        <begin position="281"/>
        <end position="296"/>
    </location>
</feature>
<feature type="compositionally biased region" description="Low complexity" evidence="7">
    <location>
        <begin position="894"/>
        <end position="908"/>
    </location>
</feature>
<feature type="compositionally biased region" description="Polar residues" evidence="7">
    <location>
        <begin position="1011"/>
        <end position="1042"/>
    </location>
</feature>
<feature type="compositionally biased region" description="Basic and acidic residues" evidence="7">
    <location>
        <begin position="1069"/>
        <end position="1085"/>
    </location>
</feature>
<feature type="modified residue" description="Phosphotyrosine" evidence="3">
    <location>
        <position position="362"/>
    </location>
</feature>
<feature type="modified residue" description="Phosphoserine" evidence="21">
    <location>
        <position position="686"/>
    </location>
</feature>
<feature type="modified residue" description="Phosphotyrosine" evidence="3">
    <location>
        <position position="827"/>
    </location>
</feature>
<feature type="modified residue" description="Phosphoserine" evidence="21">
    <location>
        <position position="884"/>
    </location>
</feature>
<feature type="modified residue" description="Phosphoserine" evidence="21">
    <location>
        <position position="885"/>
    </location>
</feature>
<feature type="splice variant" id="VSP_008439" description="In isoform 3." evidence="20">
    <location>
        <begin position="1"/>
        <end position="223"/>
    </location>
</feature>
<feature type="splice variant" id="VSP_008438" description="In isoform 2." evidence="19">
    <location>
        <begin position="1"/>
        <end position="163"/>
    </location>
</feature>
<feature type="sequence conflict" description="In Ref. 2; AAD31015." evidence="20" ref="2">
    <original>L</original>
    <variation>F</variation>
    <location>
        <position position="645"/>
    </location>
</feature>
<gene>
    <name type="primary">Magi2</name>
    <name type="synonym">Acvrinp1</name>
    <name type="synonym">Aip1</name>
    <name type="synonym">Sscam</name>
</gene>
<dbReference type="EMBL" id="AF034863">
    <property type="protein sequence ID" value="AAC31124.1"/>
    <property type="molecule type" value="mRNA"/>
</dbReference>
<dbReference type="EMBL" id="AF130819">
    <property type="protein sequence ID" value="AAD31015.1"/>
    <property type="molecule type" value="mRNA"/>
</dbReference>
<dbReference type="PIR" id="T14152">
    <property type="entry name" value="T14152"/>
</dbReference>
<dbReference type="RefSeq" id="NP_446073.1">
    <property type="nucleotide sequence ID" value="NM_053621.1"/>
</dbReference>
<dbReference type="SMR" id="O88382"/>
<dbReference type="BioGRID" id="250241">
    <property type="interactions" value="7"/>
</dbReference>
<dbReference type="CORUM" id="O88382"/>
<dbReference type="FunCoup" id="O88382">
    <property type="interactions" value="2567"/>
</dbReference>
<dbReference type="IntAct" id="O88382">
    <property type="interactions" value="28"/>
</dbReference>
<dbReference type="MINT" id="O88382"/>
<dbReference type="STRING" id="10116.ENSRNOP00000059912"/>
<dbReference type="GlyGen" id="O88382">
    <property type="glycosylation" value="2 sites"/>
</dbReference>
<dbReference type="iPTMnet" id="O88382"/>
<dbReference type="PhosphoSitePlus" id="O88382"/>
<dbReference type="PaxDb" id="10116-ENSRNOP00000059912"/>
<dbReference type="GeneID" id="113970"/>
<dbReference type="KEGG" id="rno:113970"/>
<dbReference type="AGR" id="RGD:621855"/>
<dbReference type="CTD" id="9863"/>
<dbReference type="RGD" id="621855">
    <property type="gene designation" value="Magi2"/>
</dbReference>
<dbReference type="eggNOG" id="KOG3209">
    <property type="taxonomic scope" value="Eukaryota"/>
</dbReference>
<dbReference type="InParanoid" id="O88382"/>
<dbReference type="PhylomeDB" id="O88382"/>
<dbReference type="PRO" id="PR:O88382"/>
<dbReference type="Proteomes" id="UP000002494">
    <property type="component" value="Unplaced"/>
</dbReference>
<dbReference type="GO" id="GO:0005923">
    <property type="term" value="C:bicellular tight junction"/>
    <property type="evidence" value="ECO:0000250"/>
    <property type="project" value="UniProtKB"/>
</dbReference>
<dbReference type="GO" id="GO:0005911">
    <property type="term" value="C:cell-cell junction"/>
    <property type="evidence" value="ECO:0000318"/>
    <property type="project" value="GO_Central"/>
</dbReference>
<dbReference type="GO" id="GO:0005814">
    <property type="term" value="C:centriole"/>
    <property type="evidence" value="ECO:0000250"/>
    <property type="project" value="UniProtKB"/>
</dbReference>
<dbReference type="GO" id="GO:0005813">
    <property type="term" value="C:centrosome"/>
    <property type="evidence" value="ECO:0007669"/>
    <property type="project" value="UniProtKB-SubCell"/>
</dbReference>
<dbReference type="GO" id="GO:0097546">
    <property type="term" value="C:ciliary base"/>
    <property type="evidence" value="ECO:0000250"/>
    <property type="project" value="UniProtKB"/>
</dbReference>
<dbReference type="GO" id="GO:0005737">
    <property type="term" value="C:cytoplasm"/>
    <property type="evidence" value="ECO:0000314"/>
    <property type="project" value="UniProtKB"/>
</dbReference>
<dbReference type="GO" id="GO:0030425">
    <property type="term" value="C:dendrite"/>
    <property type="evidence" value="ECO:0000314"/>
    <property type="project" value="UniProtKB"/>
</dbReference>
<dbReference type="GO" id="GO:0098890">
    <property type="term" value="C:extrinsic component of postsynaptic membrane"/>
    <property type="evidence" value="ECO:0000314"/>
    <property type="project" value="SynGO"/>
</dbReference>
<dbReference type="GO" id="GO:0098982">
    <property type="term" value="C:GABA-ergic synapse"/>
    <property type="evidence" value="ECO:0000314"/>
    <property type="project" value="SynGO"/>
</dbReference>
<dbReference type="GO" id="GO:0098978">
    <property type="term" value="C:glutamatergic synapse"/>
    <property type="evidence" value="ECO:0000314"/>
    <property type="project" value="SynGO"/>
</dbReference>
<dbReference type="GO" id="GO:0005770">
    <property type="term" value="C:late endosome"/>
    <property type="evidence" value="ECO:0000314"/>
    <property type="project" value="UniProtKB"/>
</dbReference>
<dbReference type="GO" id="GO:0005634">
    <property type="term" value="C:nucleus"/>
    <property type="evidence" value="ECO:0000250"/>
    <property type="project" value="UniProtKB"/>
</dbReference>
<dbReference type="GO" id="GO:0048471">
    <property type="term" value="C:perinuclear region of cytoplasm"/>
    <property type="evidence" value="ECO:0000314"/>
    <property type="project" value="UniProtKB"/>
</dbReference>
<dbReference type="GO" id="GO:0001917">
    <property type="term" value="C:photoreceptor inner segment"/>
    <property type="evidence" value="ECO:0000250"/>
    <property type="project" value="UniProtKB"/>
</dbReference>
<dbReference type="GO" id="GO:0001750">
    <property type="term" value="C:photoreceptor outer segment"/>
    <property type="evidence" value="ECO:0000250"/>
    <property type="project" value="UniProtKB"/>
</dbReference>
<dbReference type="GO" id="GO:0005886">
    <property type="term" value="C:plasma membrane"/>
    <property type="evidence" value="ECO:0000250"/>
    <property type="project" value="UniProtKB"/>
</dbReference>
<dbReference type="GO" id="GO:0014069">
    <property type="term" value="C:postsynaptic density"/>
    <property type="evidence" value="ECO:0000314"/>
    <property type="project" value="UniProtKB"/>
</dbReference>
<dbReference type="GO" id="GO:0032991">
    <property type="term" value="C:protein-containing complex"/>
    <property type="evidence" value="ECO:0000314"/>
    <property type="project" value="UniProtKB"/>
</dbReference>
<dbReference type="GO" id="GO:0036057">
    <property type="term" value="C:slit diaphragm"/>
    <property type="evidence" value="ECO:0000314"/>
    <property type="project" value="UniProtKB"/>
</dbReference>
<dbReference type="GO" id="GO:0045202">
    <property type="term" value="C:synapse"/>
    <property type="evidence" value="ECO:0000314"/>
    <property type="project" value="UniProtKB"/>
</dbReference>
<dbReference type="GO" id="GO:0070697">
    <property type="term" value="F:activin receptor binding"/>
    <property type="evidence" value="ECO:0000266"/>
    <property type="project" value="RGD"/>
</dbReference>
<dbReference type="GO" id="GO:0031697">
    <property type="term" value="F:beta-1 adrenergic receptor binding"/>
    <property type="evidence" value="ECO:0000250"/>
    <property type="project" value="UniProtKB"/>
</dbReference>
<dbReference type="GO" id="GO:0019894">
    <property type="term" value="F:kinesin binding"/>
    <property type="evidence" value="ECO:0000353"/>
    <property type="project" value="RGD"/>
</dbReference>
<dbReference type="GO" id="GO:0019902">
    <property type="term" value="F:phosphatase binding"/>
    <property type="evidence" value="ECO:0000250"/>
    <property type="project" value="UniProtKB"/>
</dbReference>
<dbReference type="GO" id="GO:0044877">
    <property type="term" value="F:protein-containing complex binding"/>
    <property type="evidence" value="ECO:0000314"/>
    <property type="project" value="RGD"/>
</dbReference>
<dbReference type="GO" id="GO:0030159">
    <property type="term" value="F:signaling receptor complex adaptor activity"/>
    <property type="evidence" value="ECO:0000250"/>
    <property type="project" value="UniProtKB"/>
</dbReference>
<dbReference type="GO" id="GO:0046332">
    <property type="term" value="F:SMAD binding"/>
    <property type="evidence" value="ECO:0000250"/>
    <property type="project" value="UniProtKB"/>
</dbReference>
<dbReference type="GO" id="GO:0098919">
    <property type="term" value="F:structural constituent of postsynaptic density"/>
    <property type="evidence" value="ECO:0000314"/>
    <property type="project" value="SynGO"/>
</dbReference>
<dbReference type="GO" id="GO:0098879">
    <property type="term" value="F:structural constituent of postsynaptic specialization"/>
    <property type="evidence" value="ECO:0000314"/>
    <property type="project" value="SynGO"/>
</dbReference>
<dbReference type="GO" id="GO:0070699">
    <property type="term" value="F:type II activin receptor binding"/>
    <property type="evidence" value="ECO:0000250"/>
    <property type="project" value="UniProtKB"/>
</dbReference>
<dbReference type="GO" id="GO:1990090">
    <property type="term" value="P:cellular response to nerve growth factor stimulus"/>
    <property type="evidence" value="ECO:0000314"/>
    <property type="project" value="UniProtKB"/>
</dbReference>
<dbReference type="GO" id="GO:0072583">
    <property type="term" value="P:clathrin-dependent endocytosis"/>
    <property type="evidence" value="ECO:0000250"/>
    <property type="project" value="UniProtKB"/>
</dbReference>
<dbReference type="GO" id="GO:0003094">
    <property type="term" value="P:glomerular filtration"/>
    <property type="evidence" value="ECO:0000305"/>
    <property type="project" value="UniProtKB"/>
</dbReference>
<dbReference type="GO" id="GO:0032926">
    <property type="term" value="P:negative regulation of activin receptor signaling pathway"/>
    <property type="evidence" value="ECO:0000250"/>
    <property type="project" value="UniProtKB"/>
</dbReference>
<dbReference type="GO" id="GO:0030336">
    <property type="term" value="P:negative regulation of cell migration"/>
    <property type="evidence" value="ECO:0000314"/>
    <property type="project" value="UniProtKB"/>
</dbReference>
<dbReference type="GO" id="GO:0008285">
    <property type="term" value="P:negative regulation of cell population proliferation"/>
    <property type="evidence" value="ECO:0000314"/>
    <property type="project" value="UniProtKB"/>
</dbReference>
<dbReference type="GO" id="GO:0051898">
    <property type="term" value="P:negative regulation of phosphatidylinositol 3-kinase/protein kinase B signal transduction"/>
    <property type="evidence" value="ECO:0000250"/>
    <property type="project" value="UniProtKB"/>
</dbReference>
<dbReference type="GO" id="GO:0038180">
    <property type="term" value="P:nerve growth factor signaling pathway"/>
    <property type="evidence" value="ECO:0000314"/>
    <property type="project" value="UniProtKB"/>
</dbReference>
<dbReference type="GO" id="GO:0097118">
    <property type="term" value="P:neuroligin clustering involved in postsynaptic membrane assembly"/>
    <property type="evidence" value="ECO:0000266"/>
    <property type="project" value="RGD"/>
</dbReference>
<dbReference type="GO" id="GO:0072015">
    <property type="term" value="P:podocyte development"/>
    <property type="evidence" value="ECO:0000270"/>
    <property type="project" value="UniProtKB"/>
</dbReference>
<dbReference type="GO" id="GO:0010976">
    <property type="term" value="P:positive regulation of neuron projection development"/>
    <property type="evidence" value="ECO:0000315"/>
    <property type="project" value="UniProtKB"/>
</dbReference>
<dbReference type="GO" id="GO:0002092">
    <property type="term" value="P:positive regulation of receptor internalization"/>
    <property type="evidence" value="ECO:0000250"/>
    <property type="project" value="UniProtKB"/>
</dbReference>
<dbReference type="GO" id="GO:2000809">
    <property type="term" value="P:positive regulation of synaptic vesicle clustering"/>
    <property type="evidence" value="ECO:0000266"/>
    <property type="project" value="RGD"/>
</dbReference>
<dbReference type="GO" id="GO:0043113">
    <property type="term" value="P:receptor clustering"/>
    <property type="evidence" value="ECO:0000314"/>
    <property type="project" value="RGD"/>
</dbReference>
<dbReference type="GO" id="GO:0098696">
    <property type="term" value="P:regulation of neurotransmitter receptor localization to postsynaptic specialization membrane"/>
    <property type="evidence" value="ECO:0000314"/>
    <property type="project" value="SynGO"/>
</dbReference>
<dbReference type="GO" id="GO:0099179">
    <property type="term" value="P:regulation of synaptic membrane adhesion"/>
    <property type="evidence" value="ECO:0000314"/>
    <property type="project" value="SynGO"/>
</dbReference>
<dbReference type="GO" id="GO:0007165">
    <property type="term" value="P:signal transduction"/>
    <property type="evidence" value="ECO:0000266"/>
    <property type="project" value="RGD"/>
</dbReference>
<dbReference type="GO" id="GO:0060395">
    <property type="term" value="P:SMAD protein signal transduction"/>
    <property type="evidence" value="ECO:0000250"/>
    <property type="project" value="UniProtKB"/>
</dbReference>
<dbReference type="CDD" id="cd06730">
    <property type="entry name" value="PDZ0_MAGI-1_3-like"/>
    <property type="match status" value="1"/>
</dbReference>
<dbReference type="CDD" id="cd06731">
    <property type="entry name" value="PDZ1_MAGI-1_3-like"/>
    <property type="match status" value="1"/>
</dbReference>
<dbReference type="CDD" id="cd06732">
    <property type="entry name" value="PDZ2_MAGI-1_3-like"/>
    <property type="match status" value="1"/>
</dbReference>
<dbReference type="CDD" id="cd06733">
    <property type="entry name" value="PDZ3_MAGI-1_3-like"/>
    <property type="match status" value="1"/>
</dbReference>
<dbReference type="CDD" id="cd06734">
    <property type="entry name" value="PDZ4_MAGI-1_3-like"/>
    <property type="match status" value="1"/>
</dbReference>
<dbReference type="CDD" id="cd06735">
    <property type="entry name" value="PDZ5_MAGI-1_3-like"/>
    <property type="match status" value="1"/>
</dbReference>
<dbReference type="CDD" id="cd00201">
    <property type="entry name" value="WW"/>
    <property type="match status" value="2"/>
</dbReference>
<dbReference type="FunFam" id="2.30.42.10:FF:000005">
    <property type="entry name" value="Membrane associated guanylate kinase, WW and PDZ domain containing 1"/>
    <property type="match status" value="1"/>
</dbReference>
<dbReference type="FunFam" id="2.30.42.10:FF:000006">
    <property type="entry name" value="Membrane associated guanylate kinase, WW and PDZ domain containing 1"/>
    <property type="match status" value="1"/>
</dbReference>
<dbReference type="FunFam" id="2.30.42.10:FF:000113">
    <property type="entry name" value="Membrane associated guanylate kinase, WW and PDZ domain containing 2"/>
    <property type="match status" value="1"/>
</dbReference>
<dbReference type="FunFam" id="2.30.42.10:FF:000144">
    <property type="entry name" value="Membrane associated guanylate kinase, WW and PDZ domain containing 2"/>
    <property type="match status" value="1"/>
</dbReference>
<dbReference type="FunFam" id="2.30.42.10:FF:000150">
    <property type="entry name" value="Membrane associated guanylate kinase, WW and PDZ domain containing 2"/>
    <property type="match status" value="1"/>
</dbReference>
<dbReference type="FunFam" id="2.20.70.10:FF:000001">
    <property type="entry name" value="Membrane-associated guanylate kinase, WW and PDZ domain-containing protein 1"/>
    <property type="match status" value="1"/>
</dbReference>
<dbReference type="FunFam" id="2.30.42.10:FF:000155">
    <property type="entry name" value="membrane-associated guanylate kinase, WW and PDZ domain-containing protein 2 isoform X4"/>
    <property type="match status" value="1"/>
</dbReference>
<dbReference type="FunFam" id="2.20.70.10:FF:000002">
    <property type="entry name" value="Membrane-associated guanylate kinase, WW and PDZ domain-containing protein 3 isoform 1"/>
    <property type="match status" value="1"/>
</dbReference>
<dbReference type="FunFam" id="3.30.63.10:FF:000003">
    <property type="entry name" value="Membrane-associated guanylate kinase, WW and PDZ domain-containing protein 3 isoform 1"/>
    <property type="match status" value="1"/>
</dbReference>
<dbReference type="Gene3D" id="2.20.70.10">
    <property type="match status" value="2"/>
</dbReference>
<dbReference type="Gene3D" id="2.30.42.10">
    <property type="match status" value="6"/>
</dbReference>
<dbReference type="Gene3D" id="3.30.63.10">
    <property type="entry name" value="Guanylate Kinase phosphate binding domain"/>
    <property type="match status" value="1"/>
</dbReference>
<dbReference type="InterPro" id="IPR008145">
    <property type="entry name" value="GK/Ca_channel_bsu"/>
</dbReference>
<dbReference type="InterPro" id="IPR008144">
    <property type="entry name" value="Guanylate_kin-like_dom"/>
</dbReference>
<dbReference type="InterPro" id="IPR020590">
    <property type="entry name" value="Guanylate_kinase_CS"/>
</dbReference>
<dbReference type="InterPro" id="IPR027417">
    <property type="entry name" value="P-loop_NTPase"/>
</dbReference>
<dbReference type="InterPro" id="IPR001478">
    <property type="entry name" value="PDZ"/>
</dbReference>
<dbReference type="InterPro" id="IPR036034">
    <property type="entry name" value="PDZ_sf"/>
</dbReference>
<dbReference type="InterPro" id="IPR001202">
    <property type="entry name" value="WW_dom"/>
</dbReference>
<dbReference type="InterPro" id="IPR036020">
    <property type="entry name" value="WW_dom_sf"/>
</dbReference>
<dbReference type="PANTHER" id="PTHR10316">
    <property type="entry name" value="MEMBRANE ASSOCIATED GUANYLATE KINASE-RELATED"/>
    <property type="match status" value="1"/>
</dbReference>
<dbReference type="PANTHER" id="PTHR10316:SF27">
    <property type="entry name" value="MEMBRANE-ASSOCIATED GUANYLATE KINASE, WW AND PDZ DOMAIN-CONTAINING PROTEIN 2"/>
    <property type="match status" value="1"/>
</dbReference>
<dbReference type="Pfam" id="PF00625">
    <property type="entry name" value="Guanylate_kin"/>
    <property type="match status" value="1"/>
</dbReference>
<dbReference type="Pfam" id="PF16663">
    <property type="entry name" value="MAGI_u1"/>
    <property type="match status" value="1"/>
</dbReference>
<dbReference type="Pfam" id="PF00595">
    <property type="entry name" value="PDZ"/>
    <property type="match status" value="6"/>
</dbReference>
<dbReference type="Pfam" id="PF00397">
    <property type="entry name" value="WW"/>
    <property type="match status" value="1"/>
</dbReference>
<dbReference type="SMART" id="SM00072">
    <property type="entry name" value="GuKc"/>
    <property type="match status" value="1"/>
</dbReference>
<dbReference type="SMART" id="SM00228">
    <property type="entry name" value="PDZ"/>
    <property type="match status" value="6"/>
</dbReference>
<dbReference type="SMART" id="SM00456">
    <property type="entry name" value="WW"/>
    <property type="match status" value="2"/>
</dbReference>
<dbReference type="SUPFAM" id="SSF52540">
    <property type="entry name" value="P-loop containing nucleoside triphosphate hydrolases"/>
    <property type="match status" value="1"/>
</dbReference>
<dbReference type="SUPFAM" id="SSF50156">
    <property type="entry name" value="PDZ domain-like"/>
    <property type="match status" value="6"/>
</dbReference>
<dbReference type="SUPFAM" id="SSF51045">
    <property type="entry name" value="WW domain"/>
    <property type="match status" value="2"/>
</dbReference>
<dbReference type="PROSITE" id="PS00856">
    <property type="entry name" value="GUANYLATE_KINASE_1"/>
    <property type="match status" value="1"/>
</dbReference>
<dbReference type="PROSITE" id="PS50052">
    <property type="entry name" value="GUANYLATE_KINASE_2"/>
    <property type="match status" value="1"/>
</dbReference>
<dbReference type="PROSITE" id="PS50106">
    <property type="entry name" value="PDZ"/>
    <property type="match status" value="6"/>
</dbReference>
<dbReference type="PROSITE" id="PS01159">
    <property type="entry name" value="WW_DOMAIN_1"/>
    <property type="match status" value="2"/>
</dbReference>
<dbReference type="PROSITE" id="PS50020">
    <property type="entry name" value="WW_DOMAIN_2"/>
    <property type="match status" value="2"/>
</dbReference>